<comment type="subcellular location">
    <subcellularLocation>
        <location evidence="1">Secreted</location>
    </subcellularLocation>
</comment>
<comment type="tissue specificity">
    <text>Expressed by the venom gland.</text>
</comment>
<comment type="PTM">
    <text evidence="1">Contains 4 disulfide bonds.</text>
</comment>
<comment type="similarity">
    <text evidence="3">Belongs to the neurotoxin 19 (CSTX) family. 07 (U7-Lctx) subfamily.</text>
</comment>
<reference key="1">
    <citation type="journal article" date="2010" name="Zoology">
        <title>Transcriptome analysis of the venom glands of the Chinese wolf spider Lycosa singoriensis.</title>
        <authorList>
            <person name="Zhang Y."/>
            <person name="Chen J."/>
            <person name="Tang X."/>
            <person name="Wang F."/>
            <person name="Jiang L."/>
            <person name="Xiong X."/>
            <person name="Wang M."/>
            <person name="Rong M."/>
            <person name="Liu Z."/>
            <person name="Liang S."/>
        </authorList>
    </citation>
    <scope>NUCLEOTIDE SEQUENCE [LARGE SCALE MRNA]</scope>
    <source>
        <tissue>Venom gland</tissue>
    </source>
</reference>
<name>TX708_LYCSI</name>
<organism>
    <name type="scientific">Lycosa singoriensis</name>
    <name type="common">Wolf spider</name>
    <name type="synonym">Aranea singoriensis</name>
    <dbReference type="NCBI Taxonomy" id="434756"/>
    <lineage>
        <taxon>Eukaryota</taxon>
        <taxon>Metazoa</taxon>
        <taxon>Ecdysozoa</taxon>
        <taxon>Arthropoda</taxon>
        <taxon>Chelicerata</taxon>
        <taxon>Arachnida</taxon>
        <taxon>Araneae</taxon>
        <taxon>Araneomorphae</taxon>
        <taxon>Entelegynae</taxon>
        <taxon>Lycosoidea</taxon>
        <taxon>Lycosidae</taxon>
        <taxon>Lycosa</taxon>
    </lineage>
</organism>
<protein>
    <recommendedName>
        <fullName>U7-lycotoxin-Ls1h</fullName>
    </recommendedName>
    <alternativeName>
        <fullName>Toxin-like structure LSTX-G8</fullName>
    </alternativeName>
</protein>
<proteinExistence type="evidence at transcript level"/>
<accession>B6DCW8</accession>
<dbReference type="EMBL" id="EU926052">
    <property type="protein sequence ID" value="ACI41384.1"/>
    <property type="molecule type" value="mRNA"/>
</dbReference>
<dbReference type="EMBL" id="FM864056">
    <property type="protein sequence ID" value="CAS03653.1"/>
    <property type="molecule type" value="mRNA"/>
</dbReference>
<dbReference type="SMR" id="B6DCW8"/>
<dbReference type="ArachnoServer" id="AS000991">
    <property type="toxin name" value="U7-lycotoxin-Ls1h"/>
</dbReference>
<dbReference type="GO" id="GO:0005576">
    <property type="term" value="C:extracellular region"/>
    <property type="evidence" value="ECO:0007669"/>
    <property type="project" value="UniProtKB-SubCell"/>
</dbReference>
<dbReference type="GO" id="GO:0090729">
    <property type="term" value="F:toxin activity"/>
    <property type="evidence" value="ECO:0007669"/>
    <property type="project" value="UniProtKB-KW"/>
</dbReference>
<dbReference type="InterPro" id="IPR019553">
    <property type="entry name" value="Spider_toxin_CSTX_knottin"/>
</dbReference>
<dbReference type="Pfam" id="PF10530">
    <property type="entry name" value="Toxin_35"/>
    <property type="match status" value="1"/>
</dbReference>
<sequence length="78" mass="8643">MKLIIFTGLTLLLIVSLIDVEAQNEGACLPRGSVCTTNHAGCCSKLTCDCYRRFEKGVEKGQKCWCIPTGLKYSKKKE</sequence>
<keyword id="KW-1015">Disulfide bond</keyword>
<keyword id="KW-0964">Secreted</keyword>
<keyword id="KW-0732">Signal</keyword>
<keyword id="KW-0800">Toxin</keyword>
<feature type="signal peptide" evidence="2">
    <location>
        <begin position="1"/>
        <end position="22"/>
    </location>
</feature>
<feature type="propeptide" id="PRO_0000401757" evidence="1">
    <location>
        <begin position="23"/>
        <end position="26"/>
    </location>
</feature>
<feature type="chain" id="PRO_0000401758" description="U7-lycotoxin-Ls1h">
    <location>
        <begin position="27"/>
        <end position="78"/>
    </location>
</feature>
<evidence type="ECO:0000250" key="1"/>
<evidence type="ECO:0000255" key="2"/>
<evidence type="ECO:0000305" key="3"/>